<comment type="similarity">
    <text evidence="1">Belongs to the UPF0757 family.</text>
</comment>
<comment type="sequence caution" evidence="2">
    <conflict type="erroneous initiation">
        <sequence resource="EMBL-CDS" id="CAR07514"/>
    </conflict>
</comment>
<feature type="chain" id="PRO_0000388961" description="UPF0757 protein YmgG">
    <location>
        <begin position="1"/>
        <end position="114"/>
    </location>
</feature>
<organism>
    <name type="scientific">Escherichia coli O81 (strain ED1a)</name>
    <dbReference type="NCBI Taxonomy" id="585397"/>
    <lineage>
        <taxon>Bacteria</taxon>
        <taxon>Pseudomonadati</taxon>
        <taxon>Pseudomonadota</taxon>
        <taxon>Gammaproteobacteria</taxon>
        <taxon>Enterobacterales</taxon>
        <taxon>Enterobacteriaceae</taxon>
        <taxon>Escherichia</taxon>
    </lineage>
</organism>
<protein>
    <recommendedName>
        <fullName evidence="1">UPF0757 protein YmgG</fullName>
    </recommendedName>
</protein>
<reference key="1">
    <citation type="journal article" date="2009" name="PLoS Genet.">
        <title>Organised genome dynamics in the Escherichia coli species results in highly diverse adaptive paths.</title>
        <authorList>
            <person name="Touchon M."/>
            <person name="Hoede C."/>
            <person name="Tenaillon O."/>
            <person name="Barbe V."/>
            <person name="Baeriswyl S."/>
            <person name="Bidet P."/>
            <person name="Bingen E."/>
            <person name="Bonacorsi S."/>
            <person name="Bouchier C."/>
            <person name="Bouvet O."/>
            <person name="Calteau A."/>
            <person name="Chiapello H."/>
            <person name="Clermont O."/>
            <person name="Cruveiller S."/>
            <person name="Danchin A."/>
            <person name="Diard M."/>
            <person name="Dossat C."/>
            <person name="Karoui M.E."/>
            <person name="Frapy E."/>
            <person name="Garry L."/>
            <person name="Ghigo J.M."/>
            <person name="Gilles A.M."/>
            <person name="Johnson J."/>
            <person name="Le Bouguenec C."/>
            <person name="Lescat M."/>
            <person name="Mangenot S."/>
            <person name="Martinez-Jehanne V."/>
            <person name="Matic I."/>
            <person name="Nassif X."/>
            <person name="Oztas S."/>
            <person name="Petit M.A."/>
            <person name="Pichon C."/>
            <person name="Rouy Z."/>
            <person name="Ruf C.S."/>
            <person name="Schneider D."/>
            <person name="Tourret J."/>
            <person name="Vacherie B."/>
            <person name="Vallenet D."/>
            <person name="Medigue C."/>
            <person name="Rocha E.P.C."/>
            <person name="Denamur E."/>
        </authorList>
    </citation>
    <scope>NUCLEOTIDE SEQUENCE [LARGE SCALE GENOMIC DNA]</scope>
    <source>
        <strain>ED1a</strain>
    </source>
</reference>
<proteinExistence type="inferred from homology"/>
<accession>B7MTV0</accession>
<dbReference type="EMBL" id="CU928162">
    <property type="protein sequence ID" value="CAR07514.1"/>
    <property type="status" value="ALT_INIT"/>
    <property type="molecule type" value="Genomic_DNA"/>
</dbReference>
<dbReference type="RefSeq" id="WP_000726974.1">
    <property type="nucleotide sequence ID" value="NC_011745.1"/>
</dbReference>
<dbReference type="KEGG" id="ecq:ECED1_1314"/>
<dbReference type="HOGENOM" id="CLU_164687_0_0_6"/>
<dbReference type="Proteomes" id="UP000000748">
    <property type="component" value="Chromosome"/>
</dbReference>
<dbReference type="HAMAP" id="MF_01455">
    <property type="entry name" value="UPF0757"/>
    <property type="match status" value="1"/>
</dbReference>
<dbReference type="InterPro" id="IPR025693">
    <property type="entry name" value="Gly-zipper_OmpA-like_dom"/>
</dbReference>
<dbReference type="InterPro" id="IPR027367">
    <property type="entry name" value="Gly-zipper_YMGG"/>
</dbReference>
<dbReference type="InterPro" id="IPR022833">
    <property type="entry name" value="UPF0757_YmgG"/>
</dbReference>
<dbReference type="Pfam" id="PF13436">
    <property type="entry name" value="Gly-zipper_OmpA"/>
    <property type="match status" value="1"/>
</dbReference>
<dbReference type="Pfam" id="PF13441">
    <property type="entry name" value="Gly-zipper_YMGG"/>
    <property type="match status" value="1"/>
</dbReference>
<name>YMGG_ECO81</name>
<sequence>MKKKILAFGLISALFCSTPAMADMNRTTKGALLGAGVGLLTGNGVNGVLKGAAVGAGVGAVTEKGRDGKNARKGAKVGAAVGAVTGVLTGNGLEGAIKGAVIGGTGGAILGKMK</sequence>
<evidence type="ECO:0000255" key="1">
    <source>
        <dbReference type="HAMAP-Rule" id="MF_01455"/>
    </source>
</evidence>
<evidence type="ECO:0000305" key="2"/>
<gene>
    <name evidence="1" type="primary">ymgG</name>
    <name type="ordered locus">ECED1_1314</name>
</gene>